<comment type="function">
    <text evidence="1">Catalyzes the addition and repair of the essential 3'-terminal CCA sequence in tRNAs without using a nucleic acid template. Adds these three nucleotides in the order of C, C, and A to the tRNA nucleotide-73, using CTP and ATP as substrates and producing inorganic pyrophosphate. tRNA 3'-terminal CCA addition is required both for tRNA processing and repair. Also involved in tRNA surveillance by mediating tandem CCA addition to generate a CCACCA at the 3' terminus of unstable tRNAs. While stable tRNAs receive only 3'-terminal CCA, unstable tRNAs are marked with CCACCA and rapidly degraded.</text>
</comment>
<comment type="catalytic activity">
    <reaction evidence="1">
        <text>a tRNA precursor + 2 CTP + ATP = a tRNA with a 3' CCA end + 3 diphosphate</text>
        <dbReference type="Rhea" id="RHEA:14433"/>
        <dbReference type="Rhea" id="RHEA-COMP:10465"/>
        <dbReference type="Rhea" id="RHEA-COMP:10468"/>
        <dbReference type="ChEBI" id="CHEBI:30616"/>
        <dbReference type="ChEBI" id="CHEBI:33019"/>
        <dbReference type="ChEBI" id="CHEBI:37563"/>
        <dbReference type="ChEBI" id="CHEBI:74896"/>
        <dbReference type="ChEBI" id="CHEBI:83071"/>
        <dbReference type="EC" id="2.7.7.72"/>
    </reaction>
</comment>
<comment type="catalytic activity">
    <reaction evidence="1">
        <text>a tRNA with a 3' CCA end + 2 CTP + ATP = a tRNA with a 3' CCACCA end + 3 diphosphate</text>
        <dbReference type="Rhea" id="RHEA:76235"/>
        <dbReference type="Rhea" id="RHEA-COMP:10468"/>
        <dbReference type="Rhea" id="RHEA-COMP:18655"/>
        <dbReference type="ChEBI" id="CHEBI:30616"/>
        <dbReference type="ChEBI" id="CHEBI:33019"/>
        <dbReference type="ChEBI" id="CHEBI:37563"/>
        <dbReference type="ChEBI" id="CHEBI:83071"/>
        <dbReference type="ChEBI" id="CHEBI:195187"/>
    </reaction>
    <physiologicalReaction direction="left-to-right" evidence="1">
        <dbReference type="Rhea" id="RHEA:76236"/>
    </physiologicalReaction>
</comment>
<comment type="cofactor">
    <cofactor evidence="1">
        <name>Mg(2+)</name>
        <dbReference type="ChEBI" id="CHEBI:18420"/>
    </cofactor>
</comment>
<comment type="subunit">
    <text evidence="1">Homodimer.</text>
</comment>
<comment type="miscellaneous">
    <text evidence="1">A single active site specifically recognizes both ATP and CTP and is responsible for their addition.</text>
</comment>
<comment type="similarity">
    <text evidence="1">Belongs to the tRNA nucleotidyltransferase/poly(A) polymerase family. Bacterial CCA-adding enzyme type 3 subfamily.</text>
</comment>
<organism>
    <name type="scientific">Streptococcus agalactiae serotype III (strain NEM316)</name>
    <dbReference type="NCBI Taxonomy" id="211110"/>
    <lineage>
        <taxon>Bacteria</taxon>
        <taxon>Bacillati</taxon>
        <taxon>Bacillota</taxon>
        <taxon>Bacilli</taxon>
        <taxon>Lactobacillales</taxon>
        <taxon>Streptococcaceae</taxon>
        <taxon>Streptococcus</taxon>
    </lineage>
</organism>
<keyword id="KW-0067">ATP-binding</keyword>
<keyword id="KW-0460">Magnesium</keyword>
<keyword id="KW-0479">Metal-binding</keyword>
<keyword id="KW-0547">Nucleotide-binding</keyword>
<keyword id="KW-0548">Nucleotidyltransferase</keyword>
<keyword id="KW-0692">RNA repair</keyword>
<keyword id="KW-0694">RNA-binding</keyword>
<keyword id="KW-0808">Transferase</keyword>
<keyword id="KW-0819">tRNA processing</keyword>
<evidence type="ECO:0000255" key="1">
    <source>
        <dbReference type="HAMAP-Rule" id="MF_01263"/>
    </source>
</evidence>
<dbReference type="EC" id="2.7.7.72" evidence="1"/>
<dbReference type="EMBL" id="AL766850">
    <property type="protein sequence ID" value="CAD47070.1"/>
    <property type="molecule type" value="Genomic_DNA"/>
</dbReference>
<dbReference type="RefSeq" id="WP_001238960.1">
    <property type="nucleotide sequence ID" value="NC_004368.1"/>
</dbReference>
<dbReference type="SMR" id="Q8E4J0"/>
<dbReference type="KEGG" id="san:gbs1411"/>
<dbReference type="eggNOG" id="COG0617">
    <property type="taxonomic scope" value="Bacteria"/>
</dbReference>
<dbReference type="HOGENOM" id="CLU_015961_3_0_9"/>
<dbReference type="Proteomes" id="UP000000823">
    <property type="component" value="Chromosome"/>
</dbReference>
<dbReference type="GO" id="GO:0005524">
    <property type="term" value="F:ATP binding"/>
    <property type="evidence" value="ECO:0007669"/>
    <property type="project" value="UniProtKB-UniRule"/>
</dbReference>
<dbReference type="GO" id="GO:0004810">
    <property type="term" value="F:CCA tRNA nucleotidyltransferase activity"/>
    <property type="evidence" value="ECO:0007669"/>
    <property type="project" value="UniProtKB-UniRule"/>
</dbReference>
<dbReference type="GO" id="GO:0000287">
    <property type="term" value="F:magnesium ion binding"/>
    <property type="evidence" value="ECO:0007669"/>
    <property type="project" value="UniProtKB-UniRule"/>
</dbReference>
<dbReference type="GO" id="GO:0000049">
    <property type="term" value="F:tRNA binding"/>
    <property type="evidence" value="ECO:0007669"/>
    <property type="project" value="UniProtKB-UniRule"/>
</dbReference>
<dbReference type="GO" id="GO:0042245">
    <property type="term" value="P:RNA repair"/>
    <property type="evidence" value="ECO:0007669"/>
    <property type="project" value="UniProtKB-KW"/>
</dbReference>
<dbReference type="GO" id="GO:0001680">
    <property type="term" value="P:tRNA 3'-terminal CCA addition"/>
    <property type="evidence" value="ECO:0007669"/>
    <property type="project" value="UniProtKB-UniRule"/>
</dbReference>
<dbReference type="CDD" id="cd05398">
    <property type="entry name" value="NT_ClassII-CCAase"/>
    <property type="match status" value="1"/>
</dbReference>
<dbReference type="Gene3D" id="1.10.110.30">
    <property type="match status" value="1"/>
</dbReference>
<dbReference type="Gene3D" id="1.10.246.80">
    <property type="match status" value="1"/>
</dbReference>
<dbReference type="Gene3D" id="1.20.58.560">
    <property type="match status" value="1"/>
</dbReference>
<dbReference type="Gene3D" id="3.30.460.10">
    <property type="entry name" value="Beta Polymerase, domain 2"/>
    <property type="match status" value="1"/>
</dbReference>
<dbReference type="HAMAP" id="MF_01263">
    <property type="entry name" value="CCA_bact_type3"/>
    <property type="match status" value="1"/>
</dbReference>
<dbReference type="InterPro" id="IPR050264">
    <property type="entry name" value="Bact_CCA-adding_enz_type3_sf"/>
</dbReference>
<dbReference type="InterPro" id="IPR032810">
    <property type="entry name" value="CCA-adding_enz_C"/>
</dbReference>
<dbReference type="InterPro" id="IPR023068">
    <property type="entry name" value="CCA-adding_enz_firmicutes"/>
</dbReference>
<dbReference type="InterPro" id="IPR043519">
    <property type="entry name" value="NT_sf"/>
</dbReference>
<dbReference type="InterPro" id="IPR002646">
    <property type="entry name" value="PolA_pol_head_dom"/>
</dbReference>
<dbReference type="InterPro" id="IPR032828">
    <property type="entry name" value="PolyA_RNA-bd"/>
</dbReference>
<dbReference type="NCBIfam" id="NF009814">
    <property type="entry name" value="PRK13299.1"/>
    <property type="match status" value="1"/>
</dbReference>
<dbReference type="PANTHER" id="PTHR46173">
    <property type="entry name" value="CCA TRNA NUCLEOTIDYLTRANSFERASE 1, MITOCHONDRIAL"/>
    <property type="match status" value="1"/>
</dbReference>
<dbReference type="PANTHER" id="PTHR46173:SF1">
    <property type="entry name" value="CCA TRNA NUCLEOTIDYLTRANSFERASE 1, MITOCHONDRIAL"/>
    <property type="match status" value="1"/>
</dbReference>
<dbReference type="Pfam" id="PF01743">
    <property type="entry name" value="PolyA_pol"/>
    <property type="match status" value="1"/>
</dbReference>
<dbReference type="Pfam" id="PF12627">
    <property type="entry name" value="PolyA_pol_RNAbd"/>
    <property type="match status" value="1"/>
</dbReference>
<dbReference type="Pfam" id="PF13735">
    <property type="entry name" value="tRNA_NucTran2_2"/>
    <property type="match status" value="1"/>
</dbReference>
<dbReference type="SUPFAM" id="SSF81301">
    <property type="entry name" value="Nucleotidyltransferase"/>
    <property type="match status" value="1"/>
</dbReference>
<dbReference type="SUPFAM" id="SSF81891">
    <property type="entry name" value="Poly A polymerase C-terminal region-like"/>
    <property type="match status" value="1"/>
</dbReference>
<proteinExistence type="inferred from homology"/>
<accession>Q8E4J0</accession>
<gene>
    <name evidence="1" type="primary">cca</name>
    <name type="ordered locus">gbs1411</name>
</gene>
<reference key="1">
    <citation type="journal article" date="2002" name="Mol. Microbiol.">
        <title>Genome sequence of Streptococcus agalactiae, a pathogen causing invasive neonatal disease.</title>
        <authorList>
            <person name="Glaser P."/>
            <person name="Rusniok C."/>
            <person name="Buchrieser C."/>
            <person name="Chevalier F."/>
            <person name="Frangeul L."/>
            <person name="Msadek T."/>
            <person name="Zouine M."/>
            <person name="Couve E."/>
            <person name="Lalioui L."/>
            <person name="Poyart C."/>
            <person name="Trieu-Cuot P."/>
            <person name="Kunst F."/>
        </authorList>
    </citation>
    <scope>NUCLEOTIDE SEQUENCE [LARGE SCALE GENOMIC DNA]</scope>
    <source>
        <strain>NEM316</strain>
    </source>
</reference>
<name>CCA_STRA3</name>
<feature type="chain" id="PRO_0000139053" description="CCA-adding enzyme">
    <location>
        <begin position="1"/>
        <end position="402"/>
    </location>
</feature>
<feature type="binding site" evidence="1">
    <location>
        <position position="32"/>
    </location>
    <ligand>
        <name>ATP</name>
        <dbReference type="ChEBI" id="CHEBI:30616"/>
    </ligand>
</feature>
<feature type="binding site" evidence="1">
    <location>
        <position position="32"/>
    </location>
    <ligand>
        <name>CTP</name>
        <dbReference type="ChEBI" id="CHEBI:37563"/>
    </ligand>
</feature>
<feature type="binding site" evidence="1">
    <location>
        <position position="35"/>
    </location>
    <ligand>
        <name>ATP</name>
        <dbReference type="ChEBI" id="CHEBI:30616"/>
    </ligand>
</feature>
<feature type="binding site" evidence="1">
    <location>
        <position position="35"/>
    </location>
    <ligand>
        <name>CTP</name>
        <dbReference type="ChEBI" id="CHEBI:37563"/>
    </ligand>
</feature>
<feature type="binding site" evidence="1">
    <location>
        <position position="45"/>
    </location>
    <ligand>
        <name>Mg(2+)</name>
        <dbReference type="ChEBI" id="CHEBI:18420"/>
    </ligand>
</feature>
<feature type="binding site" evidence="1">
    <location>
        <position position="47"/>
    </location>
    <ligand>
        <name>Mg(2+)</name>
        <dbReference type="ChEBI" id="CHEBI:18420"/>
    </ligand>
</feature>
<feature type="binding site" evidence="1">
    <location>
        <position position="116"/>
    </location>
    <ligand>
        <name>ATP</name>
        <dbReference type="ChEBI" id="CHEBI:30616"/>
    </ligand>
</feature>
<feature type="binding site" evidence="1">
    <location>
        <position position="116"/>
    </location>
    <ligand>
        <name>CTP</name>
        <dbReference type="ChEBI" id="CHEBI:37563"/>
    </ligand>
</feature>
<feature type="binding site" evidence="1">
    <location>
        <position position="159"/>
    </location>
    <ligand>
        <name>ATP</name>
        <dbReference type="ChEBI" id="CHEBI:30616"/>
    </ligand>
</feature>
<feature type="binding site" evidence="1">
    <location>
        <position position="159"/>
    </location>
    <ligand>
        <name>CTP</name>
        <dbReference type="ChEBI" id="CHEBI:37563"/>
    </ligand>
</feature>
<feature type="binding site" evidence="1">
    <location>
        <position position="162"/>
    </location>
    <ligand>
        <name>ATP</name>
        <dbReference type="ChEBI" id="CHEBI:30616"/>
    </ligand>
</feature>
<feature type="binding site" evidence="1">
    <location>
        <position position="162"/>
    </location>
    <ligand>
        <name>CTP</name>
        <dbReference type="ChEBI" id="CHEBI:37563"/>
    </ligand>
</feature>
<feature type="binding site" evidence="1">
    <location>
        <position position="165"/>
    </location>
    <ligand>
        <name>ATP</name>
        <dbReference type="ChEBI" id="CHEBI:30616"/>
    </ligand>
</feature>
<feature type="binding site" evidence="1">
    <location>
        <position position="165"/>
    </location>
    <ligand>
        <name>CTP</name>
        <dbReference type="ChEBI" id="CHEBI:37563"/>
    </ligand>
</feature>
<feature type="binding site" evidence="1">
    <location>
        <position position="168"/>
    </location>
    <ligand>
        <name>ATP</name>
        <dbReference type="ChEBI" id="CHEBI:30616"/>
    </ligand>
</feature>
<feature type="binding site" evidence="1">
    <location>
        <position position="168"/>
    </location>
    <ligand>
        <name>CTP</name>
        <dbReference type="ChEBI" id="CHEBI:37563"/>
    </ligand>
</feature>
<protein>
    <recommendedName>
        <fullName evidence="1">CCA-adding enzyme</fullName>
        <ecNumber evidence="1">2.7.7.72</ecNumber>
    </recommendedName>
    <alternativeName>
        <fullName evidence="1">CCA tRNA nucleotidyltransferase</fullName>
    </alternativeName>
    <alternativeName>
        <fullName evidence="1">tRNA CCA-pyrophosphorylase</fullName>
    </alternativeName>
    <alternativeName>
        <fullName evidence="1">tRNA adenylyl-/cytidylyl- transferase</fullName>
    </alternativeName>
    <alternativeName>
        <fullName evidence="1">tRNA nucleotidyltransferase</fullName>
    </alternativeName>
    <alternativeName>
        <fullName evidence="1">tRNA-NT</fullName>
    </alternativeName>
</protein>
<sequence length="402" mass="46475">MRLNYLPSEFQKALPILKKIKKAGYEAYFVGGSVRDVLLDRPIHDVDIATSSYPEETKQIFKRTVDVGIEHGTVLVLEKGGEYEITTFRTEEVYVDYRRPSQVNFVRSLEEDLKRRDFTVNAFALNEDGEVIDLFHGLDDLDNHLLRAVGLASERFNEDALRIMRGLRFSASLNFDIETTTFEAMKKHASLLEKISVERSFIEFDKLLLAPYWRKGMLALIDSHAFNYLPCLKNRELQLSAFLSQLDKDFLFETSEQAWASLILSMEVEHTKTFLKKWKTSTHFQKDVEHIVDVYRIREQMGLTKEHLYRYGKTIIKQAEGIRKARGLMVDFEKIEQLDSELAIHDRHEIVVNGGTLIKKLGIKPGPQMGDIISQIELAIVLGQLINEEEAILHFVKQYLMD</sequence>